<evidence type="ECO:0000255" key="1">
    <source>
        <dbReference type="HAMAP-Rule" id="MF_00651"/>
    </source>
</evidence>
<keyword id="KW-0963">Cytoplasm</keyword>
<keyword id="KW-0378">Hydrolase</keyword>
<keyword id="KW-0540">Nuclease</keyword>
<keyword id="KW-0690">Ribosome biogenesis</keyword>
<sequence>MPEAGAIRPDGTVLGFDVGSRRIGVAVGTALGAGARAVAVINVHANGPDWVALDRVYKQWRPDGLVVGDPLTLDDKDQPARKRAHAFGRQLRERYALPVVLIDERSSSVEAAQRFARERADGRKRRRDAEALDAMAAAVIVERWLAAPDQATSLP</sequence>
<dbReference type="EC" id="3.1.-.-" evidence="1"/>
<dbReference type="EMBL" id="AM039952">
    <property type="protein sequence ID" value="CAJ24785.1"/>
    <property type="molecule type" value="Genomic_DNA"/>
</dbReference>
<dbReference type="SMR" id="Q3BR20"/>
<dbReference type="STRING" id="456327.BJD11_07520"/>
<dbReference type="KEGG" id="xcv:XCV3062"/>
<dbReference type="eggNOG" id="COG0816">
    <property type="taxonomic scope" value="Bacteria"/>
</dbReference>
<dbReference type="HOGENOM" id="CLU_098240_3_2_6"/>
<dbReference type="Proteomes" id="UP000007069">
    <property type="component" value="Chromosome"/>
</dbReference>
<dbReference type="GO" id="GO:0005829">
    <property type="term" value="C:cytosol"/>
    <property type="evidence" value="ECO:0007669"/>
    <property type="project" value="TreeGrafter"/>
</dbReference>
<dbReference type="GO" id="GO:0004518">
    <property type="term" value="F:nuclease activity"/>
    <property type="evidence" value="ECO:0007669"/>
    <property type="project" value="UniProtKB-KW"/>
</dbReference>
<dbReference type="GO" id="GO:0000967">
    <property type="term" value="P:rRNA 5'-end processing"/>
    <property type="evidence" value="ECO:0007669"/>
    <property type="project" value="UniProtKB-UniRule"/>
</dbReference>
<dbReference type="CDD" id="cd16964">
    <property type="entry name" value="YqgF"/>
    <property type="match status" value="1"/>
</dbReference>
<dbReference type="FunFam" id="3.30.420.140:FF:000010">
    <property type="entry name" value="Putative pre-16S rRNA nuclease"/>
    <property type="match status" value="1"/>
</dbReference>
<dbReference type="Gene3D" id="3.30.420.140">
    <property type="entry name" value="YqgF/RNase H-like domain"/>
    <property type="match status" value="1"/>
</dbReference>
<dbReference type="HAMAP" id="MF_00651">
    <property type="entry name" value="Nuclease_YqgF"/>
    <property type="match status" value="1"/>
</dbReference>
<dbReference type="InterPro" id="IPR012337">
    <property type="entry name" value="RNaseH-like_sf"/>
</dbReference>
<dbReference type="InterPro" id="IPR005227">
    <property type="entry name" value="YqgF"/>
</dbReference>
<dbReference type="InterPro" id="IPR006641">
    <property type="entry name" value="YqgF/RNaseH-like_dom"/>
</dbReference>
<dbReference type="InterPro" id="IPR037027">
    <property type="entry name" value="YqgF/RNaseH-like_dom_sf"/>
</dbReference>
<dbReference type="NCBIfam" id="TIGR00250">
    <property type="entry name" value="RNAse_H_YqgF"/>
    <property type="match status" value="1"/>
</dbReference>
<dbReference type="PANTHER" id="PTHR33317">
    <property type="entry name" value="POLYNUCLEOTIDYL TRANSFERASE, RIBONUCLEASE H-LIKE SUPERFAMILY PROTEIN"/>
    <property type="match status" value="1"/>
</dbReference>
<dbReference type="PANTHER" id="PTHR33317:SF4">
    <property type="entry name" value="POLYNUCLEOTIDYL TRANSFERASE, RIBONUCLEASE H-LIKE SUPERFAMILY PROTEIN"/>
    <property type="match status" value="1"/>
</dbReference>
<dbReference type="Pfam" id="PF03652">
    <property type="entry name" value="RuvX"/>
    <property type="match status" value="1"/>
</dbReference>
<dbReference type="SMART" id="SM00732">
    <property type="entry name" value="YqgFc"/>
    <property type="match status" value="1"/>
</dbReference>
<dbReference type="SUPFAM" id="SSF53098">
    <property type="entry name" value="Ribonuclease H-like"/>
    <property type="match status" value="1"/>
</dbReference>
<organism>
    <name type="scientific">Xanthomonas euvesicatoria pv. vesicatoria (strain 85-10)</name>
    <name type="common">Xanthomonas campestris pv. vesicatoria</name>
    <dbReference type="NCBI Taxonomy" id="316273"/>
    <lineage>
        <taxon>Bacteria</taxon>
        <taxon>Pseudomonadati</taxon>
        <taxon>Pseudomonadota</taxon>
        <taxon>Gammaproteobacteria</taxon>
        <taxon>Lysobacterales</taxon>
        <taxon>Lysobacteraceae</taxon>
        <taxon>Xanthomonas</taxon>
    </lineage>
</organism>
<gene>
    <name type="ordered locus">XCV3062</name>
</gene>
<protein>
    <recommendedName>
        <fullName evidence="1">Putative pre-16S rRNA nuclease</fullName>
        <ecNumber evidence="1">3.1.-.-</ecNumber>
    </recommendedName>
</protein>
<feature type="chain" id="PRO_0000257617" description="Putative pre-16S rRNA nuclease">
    <location>
        <begin position="1"/>
        <end position="155"/>
    </location>
</feature>
<proteinExistence type="inferred from homology"/>
<accession>Q3BR20</accession>
<name>YQGF_XANE5</name>
<comment type="function">
    <text evidence="1">Could be a nuclease involved in processing of the 5'-end of pre-16S rRNA.</text>
</comment>
<comment type="subcellular location">
    <subcellularLocation>
        <location evidence="1">Cytoplasm</location>
    </subcellularLocation>
</comment>
<comment type="similarity">
    <text evidence="1">Belongs to the YqgF nuclease family.</text>
</comment>
<reference key="1">
    <citation type="journal article" date="2005" name="J. Bacteriol.">
        <title>Insights into genome plasticity and pathogenicity of the plant pathogenic Bacterium Xanthomonas campestris pv. vesicatoria revealed by the complete genome sequence.</title>
        <authorList>
            <person name="Thieme F."/>
            <person name="Koebnik R."/>
            <person name="Bekel T."/>
            <person name="Berger C."/>
            <person name="Boch J."/>
            <person name="Buettner D."/>
            <person name="Caldana C."/>
            <person name="Gaigalat L."/>
            <person name="Goesmann A."/>
            <person name="Kay S."/>
            <person name="Kirchner O."/>
            <person name="Lanz C."/>
            <person name="Linke B."/>
            <person name="McHardy A.C."/>
            <person name="Meyer F."/>
            <person name="Mittenhuber G."/>
            <person name="Nies D.H."/>
            <person name="Niesbach-Kloesgen U."/>
            <person name="Patschkowski T."/>
            <person name="Rueckert C."/>
            <person name="Rupp O."/>
            <person name="Schneiker S."/>
            <person name="Schuster S.C."/>
            <person name="Vorhoelter F.J."/>
            <person name="Weber E."/>
            <person name="Puehler A."/>
            <person name="Bonas U."/>
            <person name="Bartels D."/>
            <person name="Kaiser O."/>
        </authorList>
    </citation>
    <scope>NUCLEOTIDE SEQUENCE [LARGE SCALE GENOMIC DNA]</scope>
    <source>
        <strain>85-10</strain>
    </source>
</reference>